<name>NHR6_CAEEL</name>
<gene>
    <name type="primary">nhr-6</name>
    <name type="synonym">cnr-8</name>
    <name type="synonym">nr4a5</name>
    <name type="ORF">C48D5.1</name>
</gene>
<proteinExistence type="evidence at protein level"/>
<accession>P41829</accession>
<accession>B2MZB4</accession>
<accession>Q9GTI7</accession>
<accession>Q9XYB6</accession>
<sequence>MEQLSIQTDELQDQFSNCSPASVDSSYSSCSSVEDEIEIYTRLVRNEEPLRRDFFREMSKNSSCSSSFDYGEFGPSSSSRKGSKTTDADLDSLFHSLVETSDQVNTVPKPTKTEVESIPEEFEQKPSSSSHRLPSEMNASITHIKSELDPTMQAFQMPHNDLFLATAAPHYNPFALSNDFMPNPLMPSFTSPFYPQHFPVSDSRRGSQGTTSSSNNTGGTPSPHSSSLPTSPPQLQGFLRSFLNPDNLSTPTSFGVPSETALDADKMCAVCNDRAVCLHYGARTCEGCKGFFKRTVQKNSKYTCAGNKTCPIDKRYRSRCQYCRYQKCLEVGMVKEIVRHGSLSGRRGRLSSKTKLARSEDQPSPPLPLLALMGKAIEDHTNMTVVRQFMQPFDETIALRILHGELHATKKLLMAMPQISEIQPADFQILLSRSFFAIMAIRVANRCGNSTDTIMFESGELFSLNAFPACFQQIIRFMVDKARTFSSLVDWEPQAFAAFIALQFLAGNTEHNVLGLTNKPLVDQVQSTIINALKDHCSGSQNKLAKIVRLTQEFDVFHALGLQALDILYPSHQLPEEFMFLINLTRAPLRSTDAPPACGSPVAPSGSSLFNFQMGPAAF</sequence>
<dbReference type="EMBL" id="AF083224">
    <property type="protein sequence ID" value="AAD03682.1"/>
    <property type="molecule type" value="mRNA"/>
</dbReference>
<dbReference type="EMBL" id="AF273770">
    <property type="protein sequence ID" value="AAG15119.1"/>
    <property type="molecule type" value="mRNA"/>
</dbReference>
<dbReference type="EMBL" id="AY204167">
    <property type="protein sequence ID" value="AAO39171.1"/>
    <property type="molecule type" value="mRNA"/>
</dbReference>
<dbReference type="EMBL" id="Z36237">
    <property type="protein sequence ID" value="CAA85271.2"/>
    <property type="molecule type" value="Genomic_DNA"/>
</dbReference>
<dbReference type="EMBL" id="BX284603">
    <property type="protein sequence ID" value="CAQ48391.1"/>
    <property type="molecule type" value="Genomic_DNA"/>
</dbReference>
<dbReference type="EMBL" id="U13076">
    <property type="protein sequence ID" value="AAA96984.1"/>
    <property type="molecule type" value="mRNA"/>
</dbReference>
<dbReference type="PIR" id="G88408">
    <property type="entry name" value="G88408"/>
</dbReference>
<dbReference type="PIR" id="T43348">
    <property type="entry name" value="T43348"/>
</dbReference>
<dbReference type="RefSeq" id="NP_001129836.1">
    <property type="nucleotide sequence ID" value="NM_001136364.2"/>
</dbReference>
<dbReference type="RefSeq" id="NP_001379487.1">
    <molecule id="P41829-2"/>
    <property type="nucleotide sequence ID" value="NM_001393310.1"/>
</dbReference>
<dbReference type="RefSeq" id="NP_497731.1">
    <molecule id="P41829-1"/>
    <property type="nucleotide sequence ID" value="NM_065330.8"/>
</dbReference>
<dbReference type="SMR" id="P41829"/>
<dbReference type="BioGRID" id="40702">
    <property type="interactions" value="31"/>
</dbReference>
<dbReference type="DIP" id="DIP-26405N"/>
<dbReference type="FunCoup" id="P41829">
    <property type="interactions" value="140"/>
</dbReference>
<dbReference type="IntAct" id="P41829">
    <property type="interactions" value="22"/>
</dbReference>
<dbReference type="STRING" id="6239.C48D5.1a.1"/>
<dbReference type="PaxDb" id="6239-C48D5.1a"/>
<dbReference type="EnsemblMetazoa" id="C48D5.1a.1">
    <molecule id="P41829-1"/>
    <property type="protein sequence ID" value="C48D5.1a.1"/>
    <property type="gene ID" value="WBGene00003605"/>
</dbReference>
<dbReference type="EnsemblMetazoa" id="C48D5.1b.1">
    <molecule id="P41829-2"/>
    <property type="protein sequence ID" value="C48D5.1b.1"/>
    <property type="gene ID" value="WBGene00003605"/>
</dbReference>
<dbReference type="EnsemblMetazoa" id="C48D5.1b.2">
    <molecule id="P41829-2"/>
    <property type="protein sequence ID" value="C48D5.1b.2"/>
    <property type="gene ID" value="WBGene00003605"/>
</dbReference>
<dbReference type="GeneID" id="175462"/>
<dbReference type="KEGG" id="cel:CELE_C48D5.1"/>
<dbReference type="UCSC" id="C48D5.1">
    <molecule id="P41829-1"/>
    <property type="organism name" value="c. elegans"/>
</dbReference>
<dbReference type="AGR" id="WB:WBGene00003605"/>
<dbReference type="CTD" id="175462"/>
<dbReference type="WormBase" id="C48D5.1a">
    <molecule id="P41829-1"/>
    <property type="protein sequence ID" value="CE24859"/>
    <property type="gene ID" value="WBGene00003605"/>
    <property type="gene designation" value="nhr-6"/>
</dbReference>
<dbReference type="WormBase" id="C48D5.1b">
    <molecule id="P41829-2"/>
    <property type="protein sequence ID" value="CE42591"/>
    <property type="gene ID" value="WBGene00003605"/>
    <property type="gene designation" value="nhr-6"/>
</dbReference>
<dbReference type="eggNOG" id="KOG4217">
    <property type="taxonomic scope" value="Eukaryota"/>
</dbReference>
<dbReference type="GeneTree" id="ENSGT00950000183038"/>
<dbReference type="HOGENOM" id="CLU_510231_0_0_1"/>
<dbReference type="InParanoid" id="P41829"/>
<dbReference type="OMA" id="MCAVCND"/>
<dbReference type="OrthoDB" id="5952118at2759"/>
<dbReference type="PhylomeDB" id="P41829"/>
<dbReference type="Reactome" id="R-CEL-198693">
    <property type="pathway name" value="AKT phosphorylates targets in the nucleus"/>
</dbReference>
<dbReference type="Reactome" id="R-CEL-383280">
    <property type="pathway name" value="Nuclear Receptor transcription pathway"/>
</dbReference>
<dbReference type="SignaLink" id="P41829"/>
<dbReference type="PRO" id="PR:P41829"/>
<dbReference type="Proteomes" id="UP000001940">
    <property type="component" value="Chromosome III"/>
</dbReference>
<dbReference type="Bgee" id="WBGene00003605">
    <property type="expression patterns" value="Expressed in larva and 3 other cell types or tissues"/>
</dbReference>
<dbReference type="GO" id="GO:0005634">
    <property type="term" value="C:nucleus"/>
    <property type="evidence" value="ECO:0000314"/>
    <property type="project" value="WormBase"/>
</dbReference>
<dbReference type="GO" id="GO:0005667">
    <property type="term" value="C:transcription regulator complex"/>
    <property type="evidence" value="ECO:0000318"/>
    <property type="project" value="GO_Central"/>
</dbReference>
<dbReference type="GO" id="GO:0003700">
    <property type="term" value="F:DNA-binding transcription factor activity"/>
    <property type="evidence" value="ECO:0000314"/>
    <property type="project" value="WormBase"/>
</dbReference>
<dbReference type="GO" id="GO:0000981">
    <property type="term" value="F:DNA-binding transcription factor activity, RNA polymerase II-specific"/>
    <property type="evidence" value="ECO:0000318"/>
    <property type="project" value="GO_Central"/>
</dbReference>
<dbReference type="GO" id="GO:0035259">
    <property type="term" value="F:nuclear glucocorticoid receptor binding"/>
    <property type="evidence" value="ECO:0000318"/>
    <property type="project" value="GO_Central"/>
</dbReference>
<dbReference type="GO" id="GO:0000978">
    <property type="term" value="F:RNA polymerase II cis-regulatory region sequence-specific DNA binding"/>
    <property type="evidence" value="ECO:0000318"/>
    <property type="project" value="GO_Central"/>
</dbReference>
<dbReference type="GO" id="GO:0043565">
    <property type="term" value="F:sequence-specific DNA binding"/>
    <property type="evidence" value="ECO:0000314"/>
    <property type="project" value="WormBase"/>
</dbReference>
<dbReference type="GO" id="GO:0008270">
    <property type="term" value="F:zinc ion binding"/>
    <property type="evidence" value="ECO:0007669"/>
    <property type="project" value="UniProtKB-KW"/>
</dbReference>
<dbReference type="GO" id="GO:0071376">
    <property type="term" value="P:cellular response to corticotropin-releasing hormone stimulus"/>
    <property type="evidence" value="ECO:0000318"/>
    <property type="project" value="GO_Central"/>
</dbReference>
<dbReference type="GO" id="GO:0045944">
    <property type="term" value="P:positive regulation of transcription by RNA polymerase II"/>
    <property type="evidence" value="ECO:0000314"/>
    <property type="project" value="WormBase"/>
</dbReference>
<dbReference type="GO" id="GO:0060278">
    <property type="term" value="P:regulation of ovulation"/>
    <property type="evidence" value="ECO:0000315"/>
    <property type="project" value="WormBase"/>
</dbReference>
<dbReference type="GO" id="GO:0006357">
    <property type="term" value="P:regulation of transcription by RNA polymerase II"/>
    <property type="evidence" value="ECO:0000318"/>
    <property type="project" value="GO_Central"/>
</dbReference>
<dbReference type="GO" id="GO:0035211">
    <property type="term" value="P:spermathecum morphogenesis"/>
    <property type="evidence" value="ECO:0000315"/>
    <property type="project" value="WormBase"/>
</dbReference>
<dbReference type="CDD" id="cd06969">
    <property type="entry name" value="NR_DBD_NGFI-B"/>
    <property type="match status" value="1"/>
</dbReference>
<dbReference type="FunFam" id="3.30.50.10:FF:000116">
    <property type="entry name" value="Nuclear receptor subfamily 4, group A, member 1"/>
    <property type="match status" value="1"/>
</dbReference>
<dbReference type="Gene3D" id="3.30.50.10">
    <property type="entry name" value="Erythroid Transcription Factor GATA-1, subunit A"/>
    <property type="match status" value="1"/>
</dbReference>
<dbReference type="Gene3D" id="1.10.565.10">
    <property type="entry name" value="Retinoid X Receptor"/>
    <property type="match status" value="1"/>
</dbReference>
<dbReference type="InterPro" id="IPR035500">
    <property type="entry name" value="NHR-like_dom_sf"/>
</dbReference>
<dbReference type="InterPro" id="IPR000536">
    <property type="entry name" value="Nucl_hrmn_rcpt_lig-bd"/>
</dbReference>
<dbReference type="InterPro" id="IPR001628">
    <property type="entry name" value="Znf_hrmn_rcpt"/>
</dbReference>
<dbReference type="InterPro" id="IPR013088">
    <property type="entry name" value="Znf_NHR/GATA"/>
</dbReference>
<dbReference type="PANTHER" id="PTHR24085">
    <property type="entry name" value="NUCLEAR HORMONE RECEPTOR"/>
    <property type="match status" value="1"/>
</dbReference>
<dbReference type="PANTHER" id="PTHR24085:SF4">
    <property type="entry name" value="NUCLEAR HORMONE RECEPTOR HR38-RELATED"/>
    <property type="match status" value="1"/>
</dbReference>
<dbReference type="Pfam" id="PF00104">
    <property type="entry name" value="Hormone_recep"/>
    <property type="match status" value="1"/>
</dbReference>
<dbReference type="Pfam" id="PF00105">
    <property type="entry name" value="zf-C4"/>
    <property type="match status" value="1"/>
</dbReference>
<dbReference type="PRINTS" id="PR00047">
    <property type="entry name" value="STROIDFINGER"/>
</dbReference>
<dbReference type="SMART" id="SM00430">
    <property type="entry name" value="HOLI"/>
    <property type="match status" value="1"/>
</dbReference>
<dbReference type="SMART" id="SM00399">
    <property type="entry name" value="ZnF_C4"/>
    <property type="match status" value="1"/>
</dbReference>
<dbReference type="SUPFAM" id="SSF57716">
    <property type="entry name" value="Glucocorticoid receptor-like (DNA-binding domain)"/>
    <property type="match status" value="1"/>
</dbReference>
<dbReference type="SUPFAM" id="SSF48508">
    <property type="entry name" value="Nuclear receptor ligand-binding domain"/>
    <property type="match status" value="1"/>
</dbReference>
<dbReference type="PROSITE" id="PS51843">
    <property type="entry name" value="NR_LBD"/>
    <property type="match status" value="1"/>
</dbReference>
<dbReference type="PROSITE" id="PS00031">
    <property type="entry name" value="NUCLEAR_REC_DBD_1"/>
    <property type="match status" value="1"/>
</dbReference>
<dbReference type="PROSITE" id="PS51030">
    <property type="entry name" value="NUCLEAR_REC_DBD_2"/>
    <property type="match status" value="1"/>
</dbReference>
<protein>
    <recommendedName>
        <fullName>Nuclear hormone receptor family member nhr-6</fullName>
    </recommendedName>
    <alternativeName>
        <fullName>Nuclear receptor subfamily 4 group A member 5</fullName>
    </alternativeName>
    <alternativeName>
        <fullName>Steroid hormone receptor family member cnr8</fullName>
    </alternativeName>
</protein>
<keyword id="KW-0025">Alternative splicing</keyword>
<keyword id="KW-0238">DNA-binding</keyword>
<keyword id="KW-0479">Metal-binding</keyword>
<keyword id="KW-0539">Nucleus</keyword>
<keyword id="KW-0675">Receptor</keyword>
<keyword id="KW-1185">Reference proteome</keyword>
<keyword id="KW-0804">Transcription</keyword>
<keyword id="KW-0805">Transcription regulation</keyword>
<keyword id="KW-0862">Zinc</keyword>
<keyword id="KW-0863">Zinc-finger</keyword>
<organism>
    <name type="scientific">Caenorhabditis elegans</name>
    <dbReference type="NCBI Taxonomy" id="6239"/>
    <lineage>
        <taxon>Eukaryota</taxon>
        <taxon>Metazoa</taxon>
        <taxon>Ecdysozoa</taxon>
        <taxon>Nematoda</taxon>
        <taxon>Chromadorea</taxon>
        <taxon>Rhabditida</taxon>
        <taxon>Rhabditina</taxon>
        <taxon>Rhabditomorpha</taxon>
        <taxon>Rhabditoidea</taxon>
        <taxon>Rhabditidae</taxon>
        <taxon>Peloderinae</taxon>
        <taxon>Caenorhabditis</taxon>
    </lineage>
</organism>
<evidence type="ECO:0000255" key="1">
    <source>
        <dbReference type="PROSITE-ProRule" id="PRU00407"/>
    </source>
</evidence>
<evidence type="ECO:0000255" key="2">
    <source>
        <dbReference type="PROSITE-ProRule" id="PRU01189"/>
    </source>
</evidence>
<evidence type="ECO:0000256" key="3">
    <source>
        <dbReference type="SAM" id="MobiDB-lite"/>
    </source>
</evidence>
<evidence type="ECO:0000269" key="4">
    <source>
    </source>
</evidence>
<evidence type="ECO:0000269" key="5">
    <source>
    </source>
</evidence>
<evidence type="ECO:0000269" key="6">
    <source>
    </source>
</evidence>
<evidence type="ECO:0000269" key="7">
    <source>
    </source>
</evidence>
<evidence type="ECO:0000305" key="8"/>
<reference key="1">
    <citation type="journal article" date="1999" name="Genome Res.">
        <title>The nuclear receptor superfamily has undergone extensive proliferation and diversification in nematodes.</title>
        <authorList>
            <person name="Sluder A.E."/>
            <person name="Mathews S.W."/>
            <person name="Hough D."/>
            <person name="Yin V.P."/>
            <person name="Maina C.V."/>
        </authorList>
    </citation>
    <scope>NUCLEOTIDE SEQUENCE [MRNA]</scope>
    <source>
        <strain>Bristol N2</strain>
    </source>
</reference>
<reference key="2">
    <citation type="journal article" date="2005" name="J. Mol. Evol.">
        <title>Explosive lineage-specific expansion of the orphan nuclear receptor HNF4 in nematodes.</title>
        <authorList>
            <person name="Robinson-Rechavi M."/>
            <person name="Maina C.V."/>
            <person name="Gissendanner C.R."/>
            <person name="Laudet V."/>
            <person name="Sluder A."/>
        </authorList>
    </citation>
    <scope>NUCLEOTIDE SEQUENCE [MRNA]</scope>
</reference>
<reference key="3">
    <citation type="journal article" date="1998" name="Science">
        <title>Genome sequence of the nematode C. elegans: a platform for investigating biology.</title>
        <authorList>
            <consortium name="The C. elegans sequencing consortium"/>
        </authorList>
    </citation>
    <scope>NUCLEOTIDE SEQUENCE [LARGE SCALE GENOMIC DNA]</scope>
    <source>
        <strain>Bristol N2</strain>
    </source>
</reference>
<reference key="4">
    <citation type="journal article" date="1995" name="Proc. Natl. Acad. Sci. U.S.A.">
        <title>Steroid/thyroid hormone receptor genes in Caenorhabditis elegans.</title>
        <authorList>
            <person name="Kostrouch Z."/>
            <person name="Kostrouchova M."/>
            <person name="Rall J.E."/>
        </authorList>
    </citation>
    <scope>NUCLEOTIDE SEQUENCE [MRNA] OF 157-619</scope>
    <scope>DEVELOPMENTAL STAGE</scope>
    <source>
        <strain>Bristol N2</strain>
    </source>
</reference>
<reference key="5">
    <citation type="journal article" date="2008" name="Dev. Biol.">
        <title>The Caenorhabditis elegans NR4A nuclear receptor is required for spermatheca morphogenesis.</title>
        <authorList>
            <person name="Gissendanner C.R."/>
            <person name="Kelley K."/>
            <person name="Nguyen T.Q."/>
            <person name="Hoener M.C."/>
            <person name="Sluder A.E."/>
            <person name="Maina C.V."/>
        </authorList>
    </citation>
    <scope>FUNCTION</scope>
    <scope>TISSUE SPECIFICITY</scope>
    <scope>DEVELOPMENTAL STAGE</scope>
    <scope>DISRUPTION PHENOTYPE</scope>
</reference>
<reference key="6">
    <citation type="journal article" date="2010" name="Genesis">
        <title>A functional NR4A nuclear receptor DNA-binding domain is required for organ development in Caenorhabditis elegans.</title>
        <authorList>
            <person name="Heard M."/>
            <person name="Maina C.V."/>
            <person name="Morehead B.E."/>
            <person name="Hoener M.C."/>
            <person name="Nguyen T.Q."/>
            <person name="Williams C.C."/>
            <person name="Rowan B.G."/>
            <person name="Gissendanner C.R."/>
        </authorList>
    </citation>
    <scope>FUNCTION</scope>
    <scope>SUBCELLULAR LOCATION</scope>
    <scope>TISSUE SPECIFICITY</scope>
    <scope>DEVELOPMENTAL STAGE</scope>
    <scope>DOMAIN</scope>
    <scope>DISRUPTION PHENOTYPE</scope>
    <scope>MUTAGENESIS OF CYS-288</scope>
</reference>
<reference key="7">
    <citation type="journal article" date="2015" name="Dev. Dyn.">
        <title>The C. elegans NR4A nuclear receptor gene nhr-6 promotes cell cycle progression in the spermatheca lineage.</title>
        <authorList>
            <person name="Praslicka B."/>
            <person name="Gissendanner C.R."/>
        </authorList>
    </citation>
    <scope>FUNCTION</scope>
    <scope>DISRUPTION PHENOTYPE</scope>
</reference>
<comment type="function">
    <text evidence="4 5 6">Transcriptional activator that induces gene expression by binding to the NGFI-B response element (NBRE) 5'-AAAGGTCA-3' (PubMed:20506374). Required for proper morphogenesis of the spermatheca and the spermatheca-uterine valve formation (PubMed:18096150, PubMed:25529479). Promotes cell proliferation and differentiation of the spermatheca precursor cells during spermatheca development in larval stage L4 (PubMed:18096150, PubMed:25529479). Might play a role in promoting G1/S phase progression in the spermatheca precursor cell lineage (PubMed:25529479). Also required for the differentiation of the spermatheca-uterine junction core (sujc) cells which are generating the spermatheca-uterine valve (PubMed:18096150).</text>
</comment>
<comment type="subcellular location">
    <subcellularLocation>
        <location evidence="5">Nucleus</location>
    </subcellularLocation>
</comment>
<comment type="alternative products">
    <event type="alternative splicing"/>
    <isoform>
        <id>P41829-1</id>
        <name>a</name>
        <sequence type="displayed"/>
    </isoform>
    <isoform>
        <id>P41829-2</id>
        <name>b</name>
        <sequence type="described" ref="VSP_059846"/>
    </isoform>
</comment>
<comment type="tissue specificity">
    <text evidence="4 5">In hermaphrodites, expressed in the developing spermatheca and dorsal uterus (PubMed:18096150, PubMed:20506374). Expression includes the 8 cells of the dorsal somatic gonad primordium and the sujc cells that form the core of the spermatheca-uterine valve (PubMed:18096150). Expressed in the precursor cells of the spermatheca-sheath lineages (SS cells) and in the precursors and descendents of the dorsal-uterine lineage (DU cells) (PubMed:20506374). In both hermaphroditic and male animals, expressed in a pair of head chemosensory neurons (PubMed:18096150).</text>
</comment>
<comment type="developmental stage">
    <text evidence="4 5 7">Most abundant in larval stage L3 (PubMed:7816808). Expressed in larval stages L3 and L4 (PubMed:18096150, PubMed:20506374). Weakly expressed in adult animals (PubMed:18096150).</text>
</comment>
<comment type="domain">
    <text evidence="5">The NR LBD domain and the nuclear receptor DNA binding domain are sufficient for binding to the NGFI-B response element (NBRE) 5'-AAAGGTCA-3'.</text>
</comment>
<comment type="disruption phenotype">
    <text evidence="4 5 6">Reduced brood size, abnormal egg morphology and arrested egg development. Defects in ovulation with fragmentation of the proximal oocyte and endomitosis. Misplacement of ovulated oocytes into the gonad arms due to a lack of spermatheca-uterine valve formation. Degeneration of gonad tissue. Decreased spermatheca organ size due to decreased spermatheca cell number. Disorganized actin microfilaments in the spermatheca, lack of distal constriction and defects in spermathecal cell differentiation. Misexpression of let-502 in all cells of the spermatheca instead of restricted expression to the distal and proximal regions of the spermatheca. Abnormal differentiation and morphology of the sujc cells that form the core of the spermatheca-uterine valve (PubMed:18096150). Lack of cell divisions of the proximal spermatheca precursor daughter cells due to a failure of progressing to S phase during larval stage L4 (PubMed:25529479). In a fzr-1(ku298) mutant background, increase in spermatheca nuclei number as compared to the nhr-6 single mutant (PubMed:25529479). In a fog-2(q71) mutant background, a large mass of fragmented oocytes in the spermatheca and uterus (PubMed:18096150). RNAi-mediated knockdown leads to reduced brood size and abnormal egg morphology (PubMed:20506374). In a vab-1(e2), vab-1(e699), vab-2(ju1) or vab-2(e96) mutant background, enhanced reduction in brood size (PubMed:25529479). In a vab-2(ju1) mutant background, reduced spermatheca cell number and abnormal spermatheca morphology (PubMed:25529479). In a RNAi-sensitive rrf-3(pk1426) mutant background, defects in spermatheca morphology, including decreased organ size, decreased spermatheca cell number and misplaced spermatheca nuclei. In a RNAi-sensitive eri-1(mg366) mutant background, reduced brood size, abnormal egg morphology and arrested eggs (PubMed:18096150).</text>
</comment>
<comment type="similarity">
    <text evidence="8">Belongs to the nuclear hormone receptor family. NR4 subfamily.</text>
</comment>
<feature type="chain" id="PRO_0000053727" description="Nuclear hormone receptor family member nhr-6">
    <location>
        <begin position="1"/>
        <end position="619"/>
    </location>
</feature>
<feature type="domain" description="NR LBD" evidence="2">
    <location>
        <begin position="365"/>
        <end position="600"/>
    </location>
</feature>
<feature type="DNA-binding region" description="Nuclear receptor" evidence="1">
    <location>
        <begin position="265"/>
        <end position="340"/>
    </location>
</feature>
<feature type="zinc finger region" description="NR C4-type" evidence="1">
    <location>
        <begin position="268"/>
        <end position="288"/>
    </location>
</feature>
<feature type="zinc finger region" description="NR C4-type" evidence="1">
    <location>
        <begin position="304"/>
        <end position="328"/>
    </location>
</feature>
<feature type="region of interest" description="Disordered" evidence="3">
    <location>
        <begin position="1"/>
        <end position="29"/>
    </location>
</feature>
<feature type="region of interest" description="Disordered" evidence="3">
    <location>
        <begin position="58"/>
        <end position="86"/>
    </location>
</feature>
<feature type="region of interest" description="Disordered" evidence="3">
    <location>
        <begin position="103"/>
        <end position="134"/>
    </location>
</feature>
<feature type="region of interest" description="Disordered" evidence="3">
    <location>
        <begin position="196"/>
        <end position="232"/>
    </location>
</feature>
<feature type="region of interest" description="Disordered" evidence="3">
    <location>
        <begin position="345"/>
        <end position="365"/>
    </location>
</feature>
<feature type="region of interest" description="AF-2" evidence="2">
    <location>
        <begin position="589"/>
        <end position="600"/>
    </location>
</feature>
<feature type="compositionally biased region" description="Polar residues" evidence="3">
    <location>
        <begin position="1"/>
        <end position="18"/>
    </location>
</feature>
<feature type="compositionally biased region" description="Low complexity" evidence="3">
    <location>
        <begin position="19"/>
        <end position="29"/>
    </location>
</feature>
<feature type="compositionally biased region" description="Polar residues" evidence="3">
    <location>
        <begin position="125"/>
        <end position="134"/>
    </location>
</feature>
<feature type="compositionally biased region" description="Low complexity" evidence="3">
    <location>
        <begin position="206"/>
        <end position="232"/>
    </location>
</feature>
<feature type="compositionally biased region" description="Basic residues" evidence="3">
    <location>
        <begin position="346"/>
        <end position="356"/>
    </location>
</feature>
<feature type="splice variant" id="VSP_059846" description="In isoform b.">
    <location>
        <begin position="1"/>
        <end position="136"/>
    </location>
</feature>
<feature type="mutagenesis site" description="Abolishes binding to the NGFI-B response element (NBRE) 5'-AAAGGTCA-3'. Fails to activate transcription. Abnormal spermatheca development with abnormal egg morphology, lack of the spermatheca-uterine valve and lack of distal constriction." evidence="5">
    <original>C</original>
    <variation>S</variation>
    <location>
        <position position="288"/>
    </location>
</feature>
<feature type="sequence conflict" description="In Ref. 4; AAA96984." evidence="8" ref="4">
    <original>S</original>
    <variation>T</variation>
    <location>
        <position position="188"/>
    </location>
</feature>